<feature type="signal peptide" evidence="1">
    <location>
        <begin position="1"/>
        <end position="24"/>
    </location>
</feature>
<feature type="chain" id="PRO_0000299222" description="Non-structural glycoprotein">
    <location>
        <begin position="25"/>
        <end position="609"/>
    </location>
</feature>
<feature type="topological domain" description="Extracellular" evidence="1">
    <location>
        <begin position="25"/>
        <end position="581"/>
    </location>
</feature>
<feature type="transmembrane region" description="Helical" evidence="1">
    <location>
        <begin position="582"/>
        <end position="599"/>
    </location>
</feature>
<feature type="topological domain" description="Cytoplasmic" evidence="1">
    <location>
        <begin position="600"/>
        <end position="609"/>
    </location>
</feature>
<feature type="glycosylation site" description="N-linked (GlcNAc...) asparagine; by host" evidence="1">
    <location>
        <position position="87"/>
    </location>
</feature>
<feature type="glycosylation site" description="N-linked (GlcNAc...) asparagine; by host" evidence="1">
    <location>
        <position position="375"/>
    </location>
</feature>
<feature type="glycosylation site" description="N-linked (GlcNAc...) asparagine; by host" evidence="1">
    <location>
        <position position="465"/>
    </location>
</feature>
<feature type="glycosylation site" description="N-linked (GlcNAc...) asparagine; by host" evidence="1">
    <location>
        <position position="472"/>
    </location>
</feature>
<feature type="glycosylation site" description="N-linked (GlcNAc...) asparagine; by host" evidence="1">
    <location>
        <position position="478"/>
    </location>
</feature>
<feature type="glycosylation site" description="N-linked (GlcNAc...) asparagine; by host" evidence="1">
    <location>
        <position position="506"/>
    </location>
</feature>
<feature type="glycosylation site" description="N-linked (GlcNAc...) asparagine; by host" evidence="1">
    <location>
        <position position="529"/>
    </location>
</feature>
<feature type="glycosylation site" description="N-linked (GlcNAc...) asparagine; by host" evidence="1">
    <location>
        <position position="551"/>
    </location>
</feature>
<feature type="glycosylation site" description="N-linked (GlcNAc...) asparagine; by host" evidence="1">
    <location>
        <position position="562"/>
    </location>
</feature>
<proteinExistence type="inferred from homology"/>
<organism>
    <name type="scientific">Adelaide River virus</name>
    <name type="common">ARV</name>
    <dbReference type="NCBI Taxonomy" id="31612"/>
    <lineage>
        <taxon>Viruses</taxon>
        <taxon>Riboviria</taxon>
        <taxon>Orthornavirae</taxon>
        <taxon>Negarnaviricota</taxon>
        <taxon>Haploviricotina</taxon>
        <taxon>Monjiviricetes</taxon>
        <taxon>Mononegavirales</taxon>
        <taxon>Rhabdoviridae</taxon>
        <taxon>Alpharhabdovirinae</taxon>
        <taxon>Ephemerovirus</taxon>
        <taxon>Ephemerovirus adelaide</taxon>
    </lineage>
</organism>
<dbReference type="EMBL" id="L09206">
    <property type="protein sequence ID" value="AAA02763.1"/>
    <property type="molecule type" value="Genomic_RNA"/>
</dbReference>
<dbReference type="EMBL" id="L09208">
    <property type="protein sequence ID" value="AAA02765.1"/>
    <property type="molecule type" value="Genomic_RNA"/>
</dbReference>
<dbReference type="PIR" id="T02769">
    <property type="entry name" value="T02769"/>
</dbReference>
<dbReference type="RefSeq" id="YP_009177243.1">
    <property type="nucleotide sequence ID" value="NC_028246.1"/>
</dbReference>
<dbReference type="GlyCosmos" id="Q89904">
    <property type="glycosylation" value="9 sites, No reported glycans"/>
</dbReference>
<dbReference type="GeneID" id="26123213"/>
<dbReference type="KEGG" id="vg:26123213"/>
<dbReference type="OrthoDB" id="29645at10239"/>
<dbReference type="GO" id="GO:0016020">
    <property type="term" value="C:membrane"/>
    <property type="evidence" value="ECO:0007669"/>
    <property type="project" value="UniProtKB-SubCell"/>
</dbReference>
<keyword id="KW-0325">Glycoprotein</keyword>
<keyword id="KW-0472">Membrane</keyword>
<keyword id="KW-0732">Signal</keyword>
<keyword id="KW-0812">Transmembrane</keyword>
<keyword id="KW-1133">Transmembrane helix</keyword>
<accession>Q89904</accession>
<comment type="subcellular location">
    <subcellularLocation>
        <location evidence="2">Membrane</location>
        <topology evidence="2">Single-pass membrane protein</topology>
    </subcellularLocation>
</comment>
<comment type="similarity">
    <text evidence="2">Belongs to the ephemerovirus glycoprotein family.</text>
</comment>
<gene>
    <name type="primary">GNS</name>
</gene>
<evidence type="ECO:0000255" key="1"/>
<evidence type="ECO:0000305" key="2"/>
<reference key="1">
    <citation type="journal article" date="1993" name="Virology">
        <title>Adelaide river rhabdovirus expresses consecutive glycoprotein genes as polycistronic mRNAs: new evidence of gene duplication as an evolutionary process.</title>
        <authorList>
            <person name="Wang Y."/>
            <person name="Walker P.J."/>
        </authorList>
    </citation>
    <scope>NUCLEOTIDE SEQUENCE [GENOMIC RNA]</scope>
</reference>
<organismHost>
    <name type="scientific">Bos taurus</name>
    <name type="common">Bovine</name>
    <dbReference type="NCBI Taxonomy" id="9913"/>
</organismHost>
<organismHost>
    <name type="scientific">Bubalus bubalis</name>
    <name type="common">Domestic water buffalo</name>
    <dbReference type="NCBI Taxonomy" id="89462"/>
</organismHost>
<organismHost>
    <name type="scientific">Culicoides</name>
    <dbReference type="NCBI Taxonomy" id="58271"/>
</organismHost>
<organismHost>
    <name type="scientific">Syncerus caffer</name>
    <name type="common">African buffalo</name>
    <dbReference type="NCBI Taxonomy" id="9970"/>
</organismHost>
<sequence>MDFLRQCTLIQVMILAITIRLTHGGWTNFPESCVQLQPENAYDEMCDDSSLTNSNSIEYHNKLKSTKKFCILNQIKSVKTNLYRCYNISITSVCNSELSSQNLHQDYEVNPISRRDCLKHIIKNWNDENLERSLIQKSEDIYRTRCNFLKNTETKIEDYIIYQEKTESSVINADGLDSMIETKLIELESNKKLDNTVKTCISWEQGGDSRFNTLNLIALDLNLCLAKNSYKLEKCLLCYFFIGQDKWYRGEDGFMISIELSELDTKSIPKCEILWYRLYPGNLLTINQDYLAKKVQERNRGCNAVKSILRSGKAPPLENMIKYTIPLQAGYGIGFREKIEKTVYSAPLRGNLVERRNYDFFRCHYFPSKIKIVENKTHTPPINLCVYHFGKGSCHYPDNKYFISMNPVSFEENQHYPKSGQSFDYQSGLNGIRKKIKNQEYYIPDSFLMTLIYSSHTKSILEKTNITEVFRNDSNYENHTLQDYLGLFNKEDEGMRPERDLINLPNITSETEDDDTSDLNLELNKNLINKTSSGFSNDNSNVINIPSKEYNKTDIKTVGKINKTSIIINHEEKDYWHEEYNMWGLSGLSFLLLLALFYNKIKRKIKRKS</sequence>
<name>VGLN_ARV</name>
<protein>
    <recommendedName>
        <fullName>Non-structural glycoprotein</fullName>
    </recommendedName>
</protein>